<gene>
    <name evidence="1" type="primary">truA</name>
    <name type="ordered locus">Dtur_1013</name>
</gene>
<protein>
    <recommendedName>
        <fullName evidence="1">tRNA pseudouridine synthase A</fullName>
        <ecNumber evidence="1">5.4.99.12</ecNumber>
    </recommendedName>
    <alternativeName>
        <fullName evidence="1">tRNA pseudouridine(38-40) synthase</fullName>
    </alternativeName>
    <alternativeName>
        <fullName evidence="1">tRNA pseudouridylate synthase I</fullName>
    </alternativeName>
    <alternativeName>
        <fullName evidence="1">tRNA-uridine isomerase I</fullName>
    </alternativeName>
</protein>
<feature type="chain" id="PRO_1000194548" description="tRNA pseudouridine synthase A">
    <location>
        <begin position="1"/>
        <end position="245"/>
    </location>
</feature>
<feature type="active site" description="Nucleophile" evidence="1">
    <location>
        <position position="52"/>
    </location>
</feature>
<feature type="binding site" evidence="1">
    <location>
        <position position="112"/>
    </location>
    <ligand>
        <name>substrate</name>
    </ligand>
</feature>
<reference key="1">
    <citation type="journal article" date="2016" name="Front. Microbiol.">
        <title>The complete genome sequence of hyperthermophile Dictyoglomus turgidum DSM 6724 reveals a specialized carbohydrate fermentor.</title>
        <authorList>
            <person name="Brumm P.J."/>
            <person name="Gowda K."/>
            <person name="Robb F.T."/>
            <person name="Mead D.A."/>
        </authorList>
    </citation>
    <scope>NUCLEOTIDE SEQUENCE [LARGE SCALE GENOMIC DNA]</scope>
    <source>
        <strain>DSM 6724 / Z-1310</strain>
    </source>
</reference>
<proteinExistence type="inferred from homology"/>
<comment type="function">
    <text evidence="1">Formation of pseudouridine at positions 38, 39 and 40 in the anticodon stem and loop of transfer RNAs.</text>
</comment>
<comment type="catalytic activity">
    <reaction evidence="1">
        <text>uridine(38/39/40) in tRNA = pseudouridine(38/39/40) in tRNA</text>
        <dbReference type="Rhea" id="RHEA:22376"/>
        <dbReference type="Rhea" id="RHEA-COMP:10085"/>
        <dbReference type="Rhea" id="RHEA-COMP:10087"/>
        <dbReference type="ChEBI" id="CHEBI:65314"/>
        <dbReference type="ChEBI" id="CHEBI:65315"/>
        <dbReference type="EC" id="5.4.99.12"/>
    </reaction>
</comment>
<comment type="subunit">
    <text evidence="1">Homodimer.</text>
</comment>
<comment type="similarity">
    <text evidence="1">Belongs to the tRNA pseudouridine synthase TruA family.</text>
</comment>
<name>TRUA_DICTD</name>
<keyword id="KW-0413">Isomerase</keyword>
<keyword id="KW-1185">Reference proteome</keyword>
<keyword id="KW-0819">tRNA processing</keyword>
<dbReference type="EC" id="5.4.99.12" evidence="1"/>
<dbReference type="EMBL" id="CP001251">
    <property type="protein sequence ID" value="ACK42293.1"/>
    <property type="molecule type" value="Genomic_DNA"/>
</dbReference>
<dbReference type="RefSeq" id="WP_012583376.1">
    <property type="nucleotide sequence ID" value="NC_011661.1"/>
</dbReference>
<dbReference type="RefSeq" id="YP_002352907.1">
    <property type="nucleotide sequence ID" value="NC_011661.1"/>
</dbReference>
<dbReference type="SMR" id="B8E1G5"/>
<dbReference type="FunCoup" id="B8E1G5">
    <property type="interactions" value="388"/>
</dbReference>
<dbReference type="STRING" id="515635.Dtur_1013"/>
<dbReference type="EnsemblBacteria" id="ACK42293">
    <property type="protein sequence ID" value="ACK42293"/>
    <property type="gene ID" value="Dtur_1013"/>
</dbReference>
<dbReference type="KEGG" id="dtu:Dtur_1013"/>
<dbReference type="PATRIC" id="fig|515635.4.peg.1050"/>
<dbReference type="eggNOG" id="COG0101">
    <property type="taxonomic scope" value="Bacteria"/>
</dbReference>
<dbReference type="HOGENOM" id="CLU_014673_0_1_0"/>
<dbReference type="InParanoid" id="B8E1G5"/>
<dbReference type="OrthoDB" id="9811823at2"/>
<dbReference type="Proteomes" id="UP000007719">
    <property type="component" value="Chromosome"/>
</dbReference>
<dbReference type="GO" id="GO:0009982">
    <property type="term" value="F:pseudouridine synthase activity"/>
    <property type="evidence" value="ECO:0000318"/>
    <property type="project" value="GO_Central"/>
</dbReference>
<dbReference type="GO" id="GO:0003723">
    <property type="term" value="F:RNA binding"/>
    <property type="evidence" value="ECO:0007669"/>
    <property type="project" value="InterPro"/>
</dbReference>
<dbReference type="GO" id="GO:0160147">
    <property type="term" value="F:tRNA pseudouridine(38-40) synthase activity"/>
    <property type="evidence" value="ECO:0007669"/>
    <property type="project" value="UniProtKB-EC"/>
</dbReference>
<dbReference type="GO" id="GO:0031119">
    <property type="term" value="P:tRNA pseudouridine synthesis"/>
    <property type="evidence" value="ECO:0000318"/>
    <property type="project" value="GO_Central"/>
</dbReference>
<dbReference type="CDD" id="cd02570">
    <property type="entry name" value="PseudoU_synth_EcTruA"/>
    <property type="match status" value="1"/>
</dbReference>
<dbReference type="FunFam" id="3.30.70.580:FF:000001">
    <property type="entry name" value="tRNA pseudouridine synthase A"/>
    <property type="match status" value="1"/>
</dbReference>
<dbReference type="FunFam" id="3.30.70.660:FF:000037">
    <property type="entry name" value="tRNA pseudouridine synthase A"/>
    <property type="match status" value="1"/>
</dbReference>
<dbReference type="Gene3D" id="3.30.70.660">
    <property type="entry name" value="Pseudouridine synthase I, catalytic domain, C-terminal subdomain"/>
    <property type="match status" value="1"/>
</dbReference>
<dbReference type="Gene3D" id="3.30.70.580">
    <property type="entry name" value="Pseudouridine synthase I, catalytic domain, N-terminal subdomain"/>
    <property type="match status" value="1"/>
</dbReference>
<dbReference type="HAMAP" id="MF_00171">
    <property type="entry name" value="TruA"/>
    <property type="match status" value="1"/>
</dbReference>
<dbReference type="InterPro" id="IPR020103">
    <property type="entry name" value="PsdUridine_synth_cat_dom_sf"/>
</dbReference>
<dbReference type="InterPro" id="IPR001406">
    <property type="entry name" value="PsdUridine_synth_TruA"/>
</dbReference>
<dbReference type="InterPro" id="IPR020097">
    <property type="entry name" value="PsdUridine_synth_TruA_a/b_dom"/>
</dbReference>
<dbReference type="InterPro" id="IPR020095">
    <property type="entry name" value="PsdUridine_synth_TruA_C"/>
</dbReference>
<dbReference type="InterPro" id="IPR020094">
    <property type="entry name" value="TruA/RsuA/RluB/E/F_N"/>
</dbReference>
<dbReference type="NCBIfam" id="TIGR00071">
    <property type="entry name" value="hisT_truA"/>
    <property type="match status" value="1"/>
</dbReference>
<dbReference type="PANTHER" id="PTHR11142">
    <property type="entry name" value="PSEUDOURIDYLATE SYNTHASE"/>
    <property type="match status" value="1"/>
</dbReference>
<dbReference type="PANTHER" id="PTHR11142:SF0">
    <property type="entry name" value="TRNA PSEUDOURIDINE SYNTHASE-LIKE 1"/>
    <property type="match status" value="1"/>
</dbReference>
<dbReference type="Pfam" id="PF01416">
    <property type="entry name" value="PseudoU_synth_1"/>
    <property type="match status" value="2"/>
</dbReference>
<dbReference type="PIRSF" id="PIRSF001430">
    <property type="entry name" value="tRNA_psdUrid_synth"/>
    <property type="match status" value="1"/>
</dbReference>
<dbReference type="SUPFAM" id="SSF55120">
    <property type="entry name" value="Pseudouridine synthase"/>
    <property type="match status" value="1"/>
</dbReference>
<evidence type="ECO:0000255" key="1">
    <source>
        <dbReference type="HAMAP-Rule" id="MF_00171"/>
    </source>
</evidence>
<accession>B8E1G5</accession>
<sequence length="245" mass="29237">MTNWKLEISYIGKDFYGFQKQPGKRTIQGELEKVLSFLFDEEIRVIGAGRTDTGVHALGQVVNFKSRGHKGFSCDKLHKVLNRLLPEDIKIKKVEIVDDSFHARYSAKRRWYIYVVYNNDERDLFLKDYSWWISREINRELLIFSANLFKGVHDFKNFCVTEDEDQTVIEVYESFWYFKKDLLIYFISAPFFLRKMVRFIVGSMVEIALGRKSLIELEDYLKEERKERFSVPAPPWGLYLFRVDY</sequence>
<organism>
    <name type="scientific">Dictyoglomus turgidum (strain DSM 6724 / Z-1310)</name>
    <dbReference type="NCBI Taxonomy" id="515635"/>
    <lineage>
        <taxon>Bacteria</taxon>
        <taxon>Pseudomonadati</taxon>
        <taxon>Dictyoglomota</taxon>
        <taxon>Dictyoglomia</taxon>
        <taxon>Dictyoglomales</taxon>
        <taxon>Dictyoglomaceae</taxon>
        <taxon>Dictyoglomus</taxon>
    </lineage>
</organism>